<feature type="chain" id="PRO_1000131770" description="Pole-localizer protein TmaR">
    <location>
        <begin position="1"/>
        <end position="112"/>
    </location>
</feature>
<feature type="coiled-coil region" evidence="1">
    <location>
        <begin position="22"/>
        <end position="42"/>
    </location>
</feature>
<feature type="coiled-coil region" evidence="1">
    <location>
        <begin position="70"/>
        <end position="104"/>
    </location>
</feature>
<organism>
    <name type="scientific">Proteus mirabilis (strain HI4320)</name>
    <dbReference type="NCBI Taxonomy" id="529507"/>
    <lineage>
        <taxon>Bacteria</taxon>
        <taxon>Pseudomonadati</taxon>
        <taxon>Pseudomonadota</taxon>
        <taxon>Gammaproteobacteria</taxon>
        <taxon>Enterobacterales</taxon>
        <taxon>Morganellaceae</taxon>
        <taxon>Proteus</taxon>
    </lineage>
</organism>
<reference key="1">
    <citation type="journal article" date="2008" name="J. Bacteriol.">
        <title>Complete genome sequence of uropathogenic Proteus mirabilis, a master of both adherence and motility.</title>
        <authorList>
            <person name="Pearson M.M."/>
            <person name="Sebaihia M."/>
            <person name="Churcher C."/>
            <person name="Quail M.A."/>
            <person name="Seshasayee A.S."/>
            <person name="Luscombe N.M."/>
            <person name="Abdellah Z."/>
            <person name="Arrosmith C."/>
            <person name="Atkin B."/>
            <person name="Chillingworth T."/>
            <person name="Hauser H."/>
            <person name="Jagels K."/>
            <person name="Moule S."/>
            <person name="Mungall K."/>
            <person name="Norbertczak H."/>
            <person name="Rabbinowitsch E."/>
            <person name="Walker D."/>
            <person name="Whithead S."/>
            <person name="Thomson N.R."/>
            <person name="Rather P.N."/>
            <person name="Parkhill J."/>
            <person name="Mobley H.L.T."/>
        </authorList>
    </citation>
    <scope>NUCLEOTIDE SEQUENCE [LARGE SCALE GENOMIC DNA]</scope>
    <source>
        <strain>HI4320</strain>
    </source>
</reference>
<proteinExistence type="inferred from homology"/>
<accession>B4ETB9</accession>
<sequence>MDNASKPSFQNVLEFVRMYRRKNKIRREITDNEKKIRDNQKRVLLLDNLSEYIKPGMSIEDVLGIIANMRSDYEDRVDDYIIKNADLSKERRELSKQLKAMGEIKNIPNIKN</sequence>
<name>TMAR_PROMH</name>
<comment type="function">
    <text evidence="1">Pole-localizer protein involved in the regulation of several cellular processes.</text>
</comment>
<comment type="subcellular location">
    <subcellularLocation>
        <location evidence="1">Cytoplasm</location>
    </subcellularLocation>
</comment>
<comment type="similarity">
    <text evidence="1">Belongs to the pole-localizer TmaR family.</text>
</comment>
<evidence type="ECO:0000255" key="1">
    <source>
        <dbReference type="HAMAP-Rule" id="MF_00683"/>
    </source>
</evidence>
<keyword id="KW-0175">Coiled coil</keyword>
<keyword id="KW-0963">Cytoplasm</keyword>
<keyword id="KW-1185">Reference proteome</keyword>
<protein>
    <recommendedName>
        <fullName evidence="1">Pole-localizer protein TmaR</fullName>
    </recommendedName>
</protein>
<gene>
    <name evidence="1" type="primary">tmaR</name>
    <name type="ordered locus">PMI0851</name>
</gene>
<dbReference type="EMBL" id="AM942759">
    <property type="protein sequence ID" value="CAR41934.1"/>
    <property type="molecule type" value="Genomic_DNA"/>
</dbReference>
<dbReference type="SMR" id="B4ETB9"/>
<dbReference type="EnsemblBacteria" id="CAR41934">
    <property type="protein sequence ID" value="CAR41934"/>
    <property type="gene ID" value="PMI0851"/>
</dbReference>
<dbReference type="GeneID" id="6802257"/>
<dbReference type="KEGG" id="pmr:PMI0851"/>
<dbReference type="eggNOG" id="COG2926">
    <property type="taxonomic scope" value="Bacteria"/>
</dbReference>
<dbReference type="HOGENOM" id="CLU_153146_0_0_6"/>
<dbReference type="Proteomes" id="UP000008319">
    <property type="component" value="Chromosome"/>
</dbReference>
<dbReference type="GO" id="GO:0005829">
    <property type="term" value="C:cytosol"/>
    <property type="evidence" value="ECO:0007669"/>
    <property type="project" value="TreeGrafter"/>
</dbReference>
<dbReference type="HAMAP" id="MF_00683">
    <property type="entry name" value="Pole_loc_TmaR"/>
    <property type="match status" value="1"/>
</dbReference>
<dbReference type="InterPro" id="IPR007458">
    <property type="entry name" value="DUF496"/>
</dbReference>
<dbReference type="InterPro" id="IPR053375">
    <property type="entry name" value="UPF0265"/>
</dbReference>
<dbReference type="NCBIfam" id="NF003844">
    <property type="entry name" value="PRK05423.1"/>
    <property type="match status" value="1"/>
</dbReference>
<dbReference type="NCBIfam" id="NF040881">
    <property type="entry name" value="PTS_reg_TmaR"/>
    <property type="match status" value="1"/>
</dbReference>
<dbReference type="PANTHER" id="PTHR39591">
    <property type="entry name" value="UPF0265 PROTEIN YEEX"/>
    <property type="match status" value="1"/>
</dbReference>
<dbReference type="PANTHER" id="PTHR39591:SF1">
    <property type="entry name" value="UPF0265 PROTEIN YEEX"/>
    <property type="match status" value="1"/>
</dbReference>
<dbReference type="Pfam" id="PF04363">
    <property type="entry name" value="DUF496"/>
    <property type="match status" value="1"/>
</dbReference>
<dbReference type="PIRSF" id="PIRSF028773">
    <property type="entry name" value="UCP028773"/>
    <property type="match status" value="1"/>
</dbReference>